<keyword id="KW-1003">Cell membrane</keyword>
<keyword id="KW-0342">GTP-binding</keyword>
<keyword id="KW-0378">Hydrolase</keyword>
<keyword id="KW-0472">Membrane</keyword>
<keyword id="KW-0547">Nucleotide-binding</keyword>
<keyword id="KW-0648">Protein biosynthesis</keyword>
<feature type="chain" id="PRO_1000118035" description="Elongation factor 4">
    <location>
        <begin position="1"/>
        <end position="607"/>
    </location>
</feature>
<feature type="domain" description="tr-type G">
    <location>
        <begin position="11"/>
        <end position="193"/>
    </location>
</feature>
<feature type="binding site" evidence="1">
    <location>
        <begin position="23"/>
        <end position="28"/>
    </location>
    <ligand>
        <name>GTP</name>
        <dbReference type="ChEBI" id="CHEBI:37565"/>
    </ligand>
</feature>
<feature type="binding site" evidence="1">
    <location>
        <begin position="140"/>
        <end position="143"/>
    </location>
    <ligand>
        <name>GTP</name>
        <dbReference type="ChEBI" id="CHEBI:37565"/>
    </ligand>
</feature>
<gene>
    <name evidence="1" type="primary">lepA</name>
    <name type="ordered locus">BCA_4430</name>
</gene>
<organism>
    <name type="scientific">Bacillus cereus (strain 03BB102)</name>
    <dbReference type="NCBI Taxonomy" id="572264"/>
    <lineage>
        <taxon>Bacteria</taxon>
        <taxon>Bacillati</taxon>
        <taxon>Bacillota</taxon>
        <taxon>Bacilli</taxon>
        <taxon>Bacillales</taxon>
        <taxon>Bacillaceae</taxon>
        <taxon>Bacillus</taxon>
        <taxon>Bacillus cereus group</taxon>
    </lineage>
</organism>
<proteinExistence type="inferred from homology"/>
<dbReference type="EC" id="3.6.5.n1" evidence="1"/>
<dbReference type="EMBL" id="CP001407">
    <property type="protein sequence ID" value="ACO26837.1"/>
    <property type="molecule type" value="Genomic_DNA"/>
</dbReference>
<dbReference type="RefSeq" id="WP_001030952.1">
    <property type="nucleotide sequence ID" value="NZ_CP009318.1"/>
</dbReference>
<dbReference type="SMR" id="C1ESL3"/>
<dbReference type="KEGG" id="bcx:BCA_4430"/>
<dbReference type="PATRIC" id="fig|572264.18.peg.4378"/>
<dbReference type="Proteomes" id="UP000002210">
    <property type="component" value="Chromosome"/>
</dbReference>
<dbReference type="GO" id="GO:0005886">
    <property type="term" value="C:plasma membrane"/>
    <property type="evidence" value="ECO:0007669"/>
    <property type="project" value="UniProtKB-SubCell"/>
</dbReference>
<dbReference type="GO" id="GO:0005525">
    <property type="term" value="F:GTP binding"/>
    <property type="evidence" value="ECO:0007669"/>
    <property type="project" value="UniProtKB-UniRule"/>
</dbReference>
<dbReference type="GO" id="GO:0003924">
    <property type="term" value="F:GTPase activity"/>
    <property type="evidence" value="ECO:0007669"/>
    <property type="project" value="UniProtKB-UniRule"/>
</dbReference>
<dbReference type="GO" id="GO:0043022">
    <property type="term" value="F:ribosome binding"/>
    <property type="evidence" value="ECO:0007669"/>
    <property type="project" value="UniProtKB-UniRule"/>
</dbReference>
<dbReference type="GO" id="GO:0003746">
    <property type="term" value="F:translation elongation factor activity"/>
    <property type="evidence" value="ECO:0007669"/>
    <property type="project" value="UniProtKB-UniRule"/>
</dbReference>
<dbReference type="GO" id="GO:0045727">
    <property type="term" value="P:positive regulation of translation"/>
    <property type="evidence" value="ECO:0007669"/>
    <property type="project" value="UniProtKB-UniRule"/>
</dbReference>
<dbReference type="CDD" id="cd03699">
    <property type="entry name" value="EF4_II"/>
    <property type="match status" value="1"/>
</dbReference>
<dbReference type="CDD" id="cd16260">
    <property type="entry name" value="EF4_III"/>
    <property type="match status" value="1"/>
</dbReference>
<dbReference type="CDD" id="cd01890">
    <property type="entry name" value="LepA"/>
    <property type="match status" value="1"/>
</dbReference>
<dbReference type="CDD" id="cd03709">
    <property type="entry name" value="lepA_C"/>
    <property type="match status" value="1"/>
</dbReference>
<dbReference type="FunFam" id="3.40.50.300:FF:000078">
    <property type="entry name" value="Elongation factor 4"/>
    <property type="match status" value="1"/>
</dbReference>
<dbReference type="FunFam" id="2.40.30.10:FF:000015">
    <property type="entry name" value="Translation factor GUF1, mitochondrial"/>
    <property type="match status" value="1"/>
</dbReference>
<dbReference type="FunFam" id="3.30.70.240:FF:000007">
    <property type="entry name" value="Translation factor GUF1, mitochondrial"/>
    <property type="match status" value="1"/>
</dbReference>
<dbReference type="FunFam" id="3.30.70.2570:FF:000001">
    <property type="entry name" value="Translation factor GUF1, mitochondrial"/>
    <property type="match status" value="1"/>
</dbReference>
<dbReference type="FunFam" id="3.30.70.870:FF:000004">
    <property type="entry name" value="Translation factor GUF1, mitochondrial"/>
    <property type="match status" value="1"/>
</dbReference>
<dbReference type="Gene3D" id="3.30.70.240">
    <property type="match status" value="1"/>
</dbReference>
<dbReference type="Gene3D" id="3.30.70.2570">
    <property type="entry name" value="Elongation factor 4, C-terminal domain"/>
    <property type="match status" value="1"/>
</dbReference>
<dbReference type="Gene3D" id="3.30.70.870">
    <property type="entry name" value="Elongation Factor G (Translational Gtpase), domain 3"/>
    <property type="match status" value="1"/>
</dbReference>
<dbReference type="Gene3D" id="3.40.50.300">
    <property type="entry name" value="P-loop containing nucleotide triphosphate hydrolases"/>
    <property type="match status" value="1"/>
</dbReference>
<dbReference type="Gene3D" id="2.40.30.10">
    <property type="entry name" value="Translation factors"/>
    <property type="match status" value="1"/>
</dbReference>
<dbReference type="HAMAP" id="MF_00071">
    <property type="entry name" value="LepA"/>
    <property type="match status" value="1"/>
</dbReference>
<dbReference type="InterPro" id="IPR006297">
    <property type="entry name" value="EF-4"/>
</dbReference>
<dbReference type="InterPro" id="IPR035647">
    <property type="entry name" value="EFG_III/V"/>
</dbReference>
<dbReference type="InterPro" id="IPR000640">
    <property type="entry name" value="EFG_V-like"/>
</dbReference>
<dbReference type="InterPro" id="IPR004161">
    <property type="entry name" value="EFTu-like_2"/>
</dbReference>
<dbReference type="InterPro" id="IPR031157">
    <property type="entry name" value="G_TR_CS"/>
</dbReference>
<dbReference type="InterPro" id="IPR038363">
    <property type="entry name" value="LepA_C_sf"/>
</dbReference>
<dbReference type="InterPro" id="IPR013842">
    <property type="entry name" value="LepA_CTD"/>
</dbReference>
<dbReference type="InterPro" id="IPR035654">
    <property type="entry name" value="LepA_IV"/>
</dbReference>
<dbReference type="InterPro" id="IPR027417">
    <property type="entry name" value="P-loop_NTPase"/>
</dbReference>
<dbReference type="InterPro" id="IPR005225">
    <property type="entry name" value="Small_GTP-bd"/>
</dbReference>
<dbReference type="InterPro" id="IPR000795">
    <property type="entry name" value="T_Tr_GTP-bd_dom"/>
</dbReference>
<dbReference type="NCBIfam" id="TIGR01393">
    <property type="entry name" value="lepA"/>
    <property type="match status" value="1"/>
</dbReference>
<dbReference type="NCBIfam" id="TIGR00231">
    <property type="entry name" value="small_GTP"/>
    <property type="match status" value="1"/>
</dbReference>
<dbReference type="PANTHER" id="PTHR43512:SF4">
    <property type="entry name" value="TRANSLATION FACTOR GUF1 HOMOLOG, CHLOROPLASTIC"/>
    <property type="match status" value="1"/>
</dbReference>
<dbReference type="PANTHER" id="PTHR43512">
    <property type="entry name" value="TRANSLATION FACTOR GUF1-RELATED"/>
    <property type="match status" value="1"/>
</dbReference>
<dbReference type="Pfam" id="PF00679">
    <property type="entry name" value="EFG_C"/>
    <property type="match status" value="1"/>
</dbReference>
<dbReference type="Pfam" id="PF00009">
    <property type="entry name" value="GTP_EFTU"/>
    <property type="match status" value="1"/>
</dbReference>
<dbReference type="Pfam" id="PF03144">
    <property type="entry name" value="GTP_EFTU_D2"/>
    <property type="match status" value="1"/>
</dbReference>
<dbReference type="Pfam" id="PF06421">
    <property type="entry name" value="LepA_C"/>
    <property type="match status" value="1"/>
</dbReference>
<dbReference type="PRINTS" id="PR00315">
    <property type="entry name" value="ELONGATNFCT"/>
</dbReference>
<dbReference type="SMART" id="SM00838">
    <property type="entry name" value="EFG_C"/>
    <property type="match status" value="1"/>
</dbReference>
<dbReference type="SUPFAM" id="SSF54980">
    <property type="entry name" value="EF-G C-terminal domain-like"/>
    <property type="match status" value="2"/>
</dbReference>
<dbReference type="SUPFAM" id="SSF52540">
    <property type="entry name" value="P-loop containing nucleoside triphosphate hydrolases"/>
    <property type="match status" value="1"/>
</dbReference>
<dbReference type="PROSITE" id="PS00301">
    <property type="entry name" value="G_TR_1"/>
    <property type="match status" value="1"/>
</dbReference>
<dbReference type="PROSITE" id="PS51722">
    <property type="entry name" value="G_TR_2"/>
    <property type="match status" value="1"/>
</dbReference>
<name>LEPA_BACC3</name>
<protein>
    <recommendedName>
        <fullName evidence="1">Elongation factor 4</fullName>
        <shortName evidence="1">EF-4</shortName>
        <ecNumber evidence="1">3.6.5.n1</ecNumber>
    </recommendedName>
    <alternativeName>
        <fullName evidence="1">Ribosomal back-translocase LepA</fullName>
    </alternativeName>
</protein>
<evidence type="ECO:0000255" key="1">
    <source>
        <dbReference type="HAMAP-Rule" id="MF_00071"/>
    </source>
</evidence>
<comment type="function">
    <text evidence="1">Required for accurate and efficient protein synthesis under certain stress conditions. May act as a fidelity factor of the translation reaction, by catalyzing a one-codon backward translocation of tRNAs on improperly translocated ribosomes. Back-translocation proceeds from a post-translocation (POST) complex to a pre-translocation (PRE) complex, thus giving elongation factor G a second chance to translocate the tRNAs correctly. Binds to ribosomes in a GTP-dependent manner.</text>
</comment>
<comment type="catalytic activity">
    <reaction evidence="1">
        <text>GTP + H2O = GDP + phosphate + H(+)</text>
        <dbReference type="Rhea" id="RHEA:19669"/>
        <dbReference type="ChEBI" id="CHEBI:15377"/>
        <dbReference type="ChEBI" id="CHEBI:15378"/>
        <dbReference type="ChEBI" id="CHEBI:37565"/>
        <dbReference type="ChEBI" id="CHEBI:43474"/>
        <dbReference type="ChEBI" id="CHEBI:58189"/>
        <dbReference type="EC" id="3.6.5.n1"/>
    </reaction>
</comment>
<comment type="subcellular location">
    <subcellularLocation>
        <location evidence="1">Cell membrane</location>
        <topology evidence="1">Peripheral membrane protein</topology>
        <orientation evidence="1">Cytoplasmic side</orientation>
    </subcellularLocation>
</comment>
<comment type="similarity">
    <text evidence="1">Belongs to the TRAFAC class translation factor GTPase superfamily. Classic translation factor GTPase family. LepA subfamily.</text>
</comment>
<accession>C1ESL3</accession>
<reference key="1">
    <citation type="submission" date="2009-02" db="EMBL/GenBank/DDBJ databases">
        <title>Genome sequence of Bacillus cereus 03BB102.</title>
        <authorList>
            <person name="Dodson R.J."/>
            <person name="Jackson P."/>
            <person name="Munk A.C."/>
            <person name="Brettin T."/>
            <person name="Bruce D."/>
            <person name="Detter C."/>
            <person name="Tapia R."/>
            <person name="Han C."/>
            <person name="Sutton G."/>
            <person name="Sims D."/>
        </authorList>
    </citation>
    <scope>NUCLEOTIDE SEQUENCE [LARGE SCALE GENOMIC DNA]</scope>
    <source>
        <strain>03BB102</strain>
    </source>
</reference>
<sequence length="607" mass="67947">MNKEERAKRQSKIRNFSIIAHIDHGKSTLADRILEKTNALTQREMKAQLLDSMDLERERGITIKLNAVQLNYKAKDGEEYILHLIDTPGHVDFTYEVSRSLAACEGAILVVDAAQGIEAQTLANVYLALDNNLEILPVINKIDLPSADPERVRQEVEDVIGLDASEAVLASAKAGIGIEEILEQIVEKVPAPTGDSEEPLQCMIFDSLYDPYRGVIAYIRVVNGTVKVGDKVRMMATGKEFEVTEVGVFTPKTTQRDELTVGDVGFLAASIKNVGDTRVGDTITHAKRPAAEPLAGYRKLNPMVFCGLYPIDSARYNDLRDALEKLELNDSALEFEPETSQALGFGFRCGFLGLLHMEIIQERIEREFKIDLITTAPSVIYKVFLTNGEDMIVDNPSNMPDPQIIDRVEEPFVKAAIMVPNDYVGAVMEICQGKRGTFIDMQYLDETRVTLTYEIPLSEIVYDFFDQLKSNTKGYASFDYELIGYKPSKLVKMDILLNSEQVDALSFIVHRDSAYDRGKVIVEKLKELIPRQQFEVPIQATIGNKVVARSTIKAMRKNVLAKCYGGDISRKRKLLDKQKEGKKRMKSVGSVEVPQEAFMAVLKMDDN</sequence>